<feature type="chain" id="PRO_0000219812" description="Light-independent protochlorophyllide reductase subunit B">
    <location>
        <begin position="1"/>
        <end position="513"/>
    </location>
</feature>
<feature type="active site" description="Proton donor" evidence="1">
    <location>
        <position position="299"/>
    </location>
</feature>
<feature type="binding site" evidence="1">
    <location>
        <position position="36"/>
    </location>
    <ligand>
        <name>[4Fe-4S] cluster</name>
        <dbReference type="ChEBI" id="CHEBI:49883"/>
        <note>ligand shared with heterodimeric partner</note>
    </ligand>
</feature>
<feature type="binding site" evidence="1">
    <location>
        <begin position="434"/>
        <end position="435"/>
    </location>
    <ligand>
        <name>substrate</name>
    </ligand>
</feature>
<sequence>MKLAYWMYAGPAHIGTLRVASSFKNVHAIMHAPLGDDYFNVMRSMLERERDFTPVTASIVDRHVLARGSQEKVVENITRKDQEENPDLIVLTPTCTSSILQEDLQNFVNRSSMSSKCDVILADVNHYRVNELQAADRTLEQIIKYYLNDAVKQKNVDRSITEYPSVNIIGFFTLGFHQQHDCRELKRLFNDLGIQINQIIPEGGSVTDIKNLPNAWFNVVPYREIGLMTATFLEKEFGMPYVSTTPMGIVDTAKFIRELQFYVNFYALEKIGYKVNYESYIDQQTRFVSQAAWFSRSIDCQNLTGKKAFVYGDSTHAVSMTKILSREMGINVICAGTYCKQDSQWFKEQVSEYCEQILITDNHTEVGDMIAKLEPSAIFGTQMERHIGKRLGIPCGVISAPVHIQNFPLSYRPFLGYEGTNQIADLVYNSFTLGMEDHLLEIFGGHDTKEVITKSLSTDLDLTWTMESQKELSKIPGFVRGKIKRNTEKYAREKGITSITVEVMYAAKESLSA</sequence>
<comment type="function">
    <text evidence="1">Component of the dark-operative protochlorophyllide reductase (DPOR) that uses Mg-ATP and reduced ferredoxin to reduce ring D of protochlorophyllide (Pchlide) to form chlorophyllide a (Chlide). This reaction is light-independent. The NB-protein (ChlN-ChlB) is the catalytic component of the complex.</text>
</comment>
<comment type="catalytic activity">
    <reaction evidence="1">
        <text>chlorophyllide a + oxidized 2[4Fe-4S]-[ferredoxin] + 2 ADP + 2 phosphate = protochlorophyllide a + reduced 2[4Fe-4S]-[ferredoxin] + 2 ATP + 2 H2O</text>
        <dbReference type="Rhea" id="RHEA:28202"/>
        <dbReference type="Rhea" id="RHEA-COMP:10002"/>
        <dbReference type="Rhea" id="RHEA-COMP:10004"/>
        <dbReference type="ChEBI" id="CHEBI:15377"/>
        <dbReference type="ChEBI" id="CHEBI:30616"/>
        <dbReference type="ChEBI" id="CHEBI:33722"/>
        <dbReference type="ChEBI" id="CHEBI:33723"/>
        <dbReference type="ChEBI" id="CHEBI:43474"/>
        <dbReference type="ChEBI" id="CHEBI:83348"/>
        <dbReference type="ChEBI" id="CHEBI:83350"/>
        <dbReference type="ChEBI" id="CHEBI:456216"/>
        <dbReference type="EC" id="1.3.7.7"/>
    </reaction>
</comment>
<comment type="cofactor">
    <cofactor evidence="1">
        <name>[4Fe-4S] cluster</name>
        <dbReference type="ChEBI" id="CHEBI:49883"/>
    </cofactor>
    <text evidence="1">Binds 1 [4Fe-4S] cluster per heterodimer. The cluster is bound at the heterodimer interface by residues from both subunits.</text>
</comment>
<comment type="pathway">
    <text evidence="1">Porphyrin-containing compound metabolism; chlorophyll biosynthesis (light-independent).</text>
</comment>
<comment type="subunit">
    <text evidence="1">Protochlorophyllide reductase is composed of three subunits; ChlL, ChlN and ChlB. Forms a heterotetramer of two ChlB and two ChlN subunits.</text>
</comment>
<comment type="subcellular location">
    <subcellularLocation>
        <location>Plastid</location>
        <location>Chloroplast</location>
    </subcellularLocation>
</comment>
<comment type="similarity">
    <text evidence="1">Belongs to the ChlB/BchB/BchZ family.</text>
</comment>
<evidence type="ECO:0000255" key="1">
    <source>
        <dbReference type="HAMAP-Rule" id="MF_00353"/>
    </source>
</evidence>
<name>CHLB_CHAGL</name>
<geneLocation type="chloroplast"/>
<keyword id="KW-0004">4Fe-4S</keyword>
<keyword id="KW-0067">ATP-binding</keyword>
<keyword id="KW-0149">Chlorophyll biosynthesis</keyword>
<keyword id="KW-0150">Chloroplast</keyword>
<keyword id="KW-0408">Iron</keyword>
<keyword id="KW-0411">Iron-sulfur</keyword>
<keyword id="KW-0479">Metal-binding</keyword>
<keyword id="KW-0547">Nucleotide-binding</keyword>
<keyword id="KW-0560">Oxidoreductase</keyword>
<keyword id="KW-0602">Photosynthesis</keyword>
<keyword id="KW-0934">Plastid</keyword>
<accession>Q8MA01</accession>
<organism>
    <name type="scientific">Chaetosphaeridium globosum</name>
    <name type="common">Charophycean green alga</name>
    <name type="synonym">Herposteiron globosum</name>
    <dbReference type="NCBI Taxonomy" id="96477"/>
    <lineage>
        <taxon>Eukaryota</taxon>
        <taxon>Viridiplantae</taxon>
        <taxon>Streptophyta</taxon>
        <taxon>Coleochaetophyceae</taxon>
        <taxon>Coleochaetales</taxon>
        <taxon>Chaetosphaeridiaceae</taxon>
        <taxon>Chaetosphaeridium</taxon>
    </lineage>
</organism>
<proteinExistence type="inferred from homology"/>
<protein>
    <recommendedName>
        <fullName evidence="1">Light-independent protochlorophyllide reductase subunit B</fullName>
        <shortName evidence="1">DPOR subunit B</shortName>
        <shortName evidence="1">LI-POR subunit B</shortName>
        <ecNumber evidence="1">1.3.7.7</ecNumber>
    </recommendedName>
</protein>
<gene>
    <name evidence="1" type="primary">chlB</name>
</gene>
<dbReference type="EC" id="1.3.7.7" evidence="1"/>
<dbReference type="EMBL" id="AF494278">
    <property type="protein sequence ID" value="AAM96507.1"/>
    <property type="molecule type" value="Genomic_DNA"/>
</dbReference>
<dbReference type="RefSeq" id="NP_683785.1">
    <property type="nucleotide sequence ID" value="NC_004115.1"/>
</dbReference>
<dbReference type="SMR" id="Q8MA01"/>
<dbReference type="GeneID" id="860683"/>
<dbReference type="UniPathway" id="UPA00670"/>
<dbReference type="GO" id="GO:0009507">
    <property type="term" value="C:chloroplast"/>
    <property type="evidence" value="ECO:0007669"/>
    <property type="project" value="UniProtKB-SubCell"/>
</dbReference>
<dbReference type="GO" id="GO:0051539">
    <property type="term" value="F:4 iron, 4 sulfur cluster binding"/>
    <property type="evidence" value="ECO:0007669"/>
    <property type="project" value="UniProtKB-UniRule"/>
</dbReference>
<dbReference type="GO" id="GO:0005524">
    <property type="term" value="F:ATP binding"/>
    <property type="evidence" value="ECO:0007669"/>
    <property type="project" value="UniProtKB-UniRule"/>
</dbReference>
<dbReference type="GO" id="GO:0046872">
    <property type="term" value="F:metal ion binding"/>
    <property type="evidence" value="ECO:0007669"/>
    <property type="project" value="UniProtKB-KW"/>
</dbReference>
<dbReference type="GO" id="GO:0016730">
    <property type="term" value="F:oxidoreductase activity, acting on iron-sulfur proteins as donors"/>
    <property type="evidence" value="ECO:0007669"/>
    <property type="project" value="InterPro"/>
</dbReference>
<dbReference type="GO" id="GO:0016636">
    <property type="term" value="F:oxidoreductase activity, acting on the CH-CH group of donors, iron-sulfur protein as acceptor"/>
    <property type="evidence" value="ECO:0007669"/>
    <property type="project" value="UniProtKB-UniRule"/>
</dbReference>
<dbReference type="GO" id="GO:0036068">
    <property type="term" value="P:light-independent chlorophyll biosynthetic process"/>
    <property type="evidence" value="ECO:0007669"/>
    <property type="project" value="UniProtKB-UniRule"/>
</dbReference>
<dbReference type="GO" id="GO:0019685">
    <property type="term" value="P:photosynthesis, dark reaction"/>
    <property type="evidence" value="ECO:0007669"/>
    <property type="project" value="InterPro"/>
</dbReference>
<dbReference type="CDD" id="cd01981">
    <property type="entry name" value="Pchlide_reductase_B"/>
    <property type="match status" value="1"/>
</dbReference>
<dbReference type="Gene3D" id="1.20.89.20">
    <property type="match status" value="1"/>
</dbReference>
<dbReference type="Gene3D" id="3.40.50.1980">
    <property type="entry name" value="Nitrogenase molybdenum iron protein domain"/>
    <property type="match status" value="3"/>
</dbReference>
<dbReference type="Gene3D" id="1.10.8.550">
    <property type="entry name" value="Proto-chlorophyllide reductase 57 kD subunit B"/>
    <property type="match status" value="1"/>
</dbReference>
<dbReference type="HAMAP" id="MF_00353">
    <property type="entry name" value="ChlB_BchB"/>
    <property type="match status" value="1"/>
</dbReference>
<dbReference type="InterPro" id="IPR050152">
    <property type="entry name" value="ChlB/BchB/BchZ"/>
</dbReference>
<dbReference type="InterPro" id="IPR013580">
    <property type="entry name" value="LI-POR_suB-like_C"/>
</dbReference>
<dbReference type="InterPro" id="IPR000510">
    <property type="entry name" value="Nase/OxRdtase_comp1"/>
</dbReference>
<dbReference type="InterPro" id="IPR042298">
    <property type="entry name" value="P-CP_red_C"/>
</dbReference>
<dbReference type="InterPro" id="IPR005969">
    <property type="entry name" value="Protochl_reductB"/>
</dbReference>
<dbReference type="InterPro" id="IPR016209">
    <property type="entry name" value="Protochlorophyllide_Rdtase"/>
</dbReference>
<dbReference type="NCBIfam" id="TIGR01278">
    <property type="entry name" value="DPOR_BchB"/>
    <property type="match status" value="1"/>
</dbReference>
<dbReference type="PANTHER" id="PTHR33712">
    <property type="entry name" value="LIGHT-INDEPENDENT PROTOCHLOROPHYLLIDE REDUCTASE SUBUNIT B"/>
    <property type="match status" value="1"/>
</dbReference>
<dbReference type="PANTHER" id="PTHR33712:SF7">
    <property type="entry name" value="LIGHT-INDEPENDENT PROTOCHLOROPHYLLIDE REDUCTASE SUBUNIT B"/>
    <property type="match status" value="1"/>
</dbReference>
<dbReference type="Pfam" id="PF00148">
    <property type="entry name" value="Oxidored_nitro"/>
    <property type="match status" value="1"/>
</dbReference>
<dbReference type="Pfam" id="PF08369">
    <property type="entry name" value="PCP_red"/>
    <property type="match status" value="1"/>
</dbReference>
<dbReference type="PIRSF" id="PIRSF000163">
    <property type="entry name" value="PCP_ChlB"/>
    <property type="match status" value="1"/>
</dbReference>
<dbReference type="SUPFAM" id="SSF53807">
    <property type="entry name" value="Helical backbone' metal receptor"/>
    <property type="match status" value="1"/>
</dbReference>
<reference key="1">
    <citation type="journal article" date="2002" name="Proc. Natl. Acad. Sci. U.S.A.">
        <title>The chloroplast and mitochondrial genome sequences of the charophyte Chaetosphaeridium globosum: insights into the timing of the events that restructured organelle DNAs within the green algal lineage that led to land plants.</title>
        <authorList>
            <person name="Turmel M."/>
            <person name="Otis C."/>
            <person name="Lemieux C."/>
        </authorList>
    </citation>
    <scope>NUCLEOTIDE SEQUENCE [LARGE SCALE GENOMIC DNA]</scope>
    <source>
        <strain>M1311</strain>
    </source>
</reference>